<keyword id="KW-0238">DNA-binding</keyword>
<keyword id="KW-0804">Transcription</keyword>
<keyword id="KW-0805">Transcription regulation</keyword>
<evidence type="ECO:0000255" key="1">
    <source>
        <dbReference type="PROSITE-ProRule" id="PRU00319"/>
    </source>
</evidence>
<evidence type="ECO:0000305" key="2"/>
<reference key="1">
    <citation type="journal article" date="1998" name="DNA Res.">
        <title>Complete sequence and gene organization of the genome of a hyper-thermophilic archaebacterium, Pyrococcus horikoshii OT3.</title>
        <authorList>
            <person name="Kawarabayasi Y."/>
            <person name="Sawada M."/>
            <person name="Horikawa H."/>
            <person name="Haikawa Y."/>
            <person name="Hino Y."/>
            <person name="Yamamoto S."/>
            <person name="Sekine M."/>
            <person name="Baba S."/>
            <person name="Kosugi H."/>
            <person name="Hosoyama A."/>
            <person name="Nagai Y."/>
            <person name="Sakai M."/>
            <person name="Ogura K."/>
            <person name="Otsuka R."/>
            <person name="Nakazawa H."/>
            <person name="Takamiya M."/>
            <person name="Ohfuku Y."/>
            <person name="Funahashi T."/>
            <person name="Tanaka T."/>
            <person name="Kudoh Y."/>
            <person name="Yamazaki J."/>
            <person name="Kushida N."/>
            <person name="Oguchi A."/>
            <person name="Aoki K."/>
            <person name="Yoshizawa T."/>
            <person name="Nakamura Y."/>
            <person name="Robb F.T."/>
            <person name="Horikoshi K."/>
            <person name="Masuchi Y."/>
            <person name="Shizuya H."/>
            <person name="Kikuchi H."/>
        </authorList>
    </citation>
    <scope>NUCLEOTIDE SEQUENCE [LARGE SCALE GENOMIC DNA]</scope>
    <source>
        <strain>ATCC 700860 / DSM 12428 / JCM 9974 / NBRC 100139 / OT-3</strain>
    </source>
</reference>
<gene>
    <name type="ordered locus">PH1055</name>
</gene>
<comment type="sequence caution" evidence="2">
    <conflict type="erroneous initiation">
        <sequence resource="EMBL-CDS" id="BAA30153"/>
    </conflict>
</comment>
<sequence>MKKRKLSKKDWEIIKLLKKDARMSDAEIGRRIGLSKSAVRWRRINLQKRGYLLISAYLRFDKLGYTYAFVLVKIKPDTPRNEILKFKKALMENEHTFEIYEVLGDYNVLIGVFGEDVSELKRNIQELIIGQKCVQEYKVLLGAKSLKGLEVPFWDALED</sequence>
<accession>O58782</accession>
<proteinExistence type="predicted"/>
<feature type="chain" id="PRO_0000111766" description="Uncharacterized HTH-type transcriptional regulator PH1055">
    <location>
        <begin position="1"/>
        <end position="159"/>
    </location>
</feature>
<feature type="domain" description="HTH asnC-type" evidence="1">
    <location>
        <begin position="6"/>
        <end position="66"/>
    </location>
</feature>
<feature type="DNA-binding region" description="H-T-H motif" evidence="1">
    <location>
        <begin position="25"/>
        <end position="44"/>
    </location>
</feature>
<dbReference type="EMBL" id="BA000001">
    <property type="protein sequence ID" value="BAA30153.1"/>
    <property type="status" value="ALT_INIT"/>
    <property type="molecule type" value="Genomic_DNA"/>
</dbReference>
<dbReference type="PIR" id="C71099">
    <property type="entry name" value="C71099"/>
</dbReference>
<dbReference type="RefSeq" id="WP_048053291.1">
    <property type="nucleotide sequence ID" value="NC_000961.1"/>
</dbReference>
<dbReference type="SMR" id="O58782"/>
<dbReference type="STRING" id="70601.gene:9378013"/>
<dbReference type="EnsemblBacteria" id="BAA30153">
    <property type="protein sequence ID" value="BAA30153"/>
    <property type="gene ID" value="BAA30153"/>
</dbReference>
<dbReference type="GeneID" id="1443377"/>
<dbReference type="KEGG" id="pho:PH1055"/>
<dbReference type="eggNOG" id="arCOG01587">
    <property type="taxonomic scope" value="Archaea"/>
</dbReference>
<dbReference type="OrthoDB" id="14434at2157"/>
<dbReference type="Proteomes" id="UP000000752">
    <property type="component" value="Chromosome"/>
</dbReference>
<dbReference type="GO" id="GO:0005829">
    <property type="term" value="C:cytosol"/>
    <property type="evidence" value="ECO:0007669"/>
    <property type="project" value="TreeGrafter"/>
</dbReference>
<dbReference type="GO" id="GO:0043565">
    <property type="term" value="F:sequence-specific DNA binding"/>
    <property type="evidence" value="ECO:0007669"/>
    <property type="project" value="InterPro"/>
</dbReference>
<dbReference type="GO" id="GO:0043200">
    <property type="term" value="P:response to amino acid"/>
    <property type="evidence" value="ECO:0007669"/>
    <property type="project" value="TreeGrafter"/>
</dbReference>
<dbReference type="Gene3D" id="3.30.70.920">
    <property type="match status" value="1"/>
</dbReference>
<dbReference type="Gene3D" id="1.10.10.10">
    <property type="entry name" value="Winged helix-like DNA-binding domain superfamily/Winged helix DNA-binding domain"/>
    <property type="match status" value="1"/>
</dbReference>
<dbReference type="InterPro" id="IPR000485">
    <property type="entry name" value="AsnC-type_HTH_dom"/>
</dbReference>
<dbReference type="InterPro" id="IPR011008">
    <property type="entry name" value="Dimeric_a/b-barrel"/>
</dbReference>
<dbReference type="InterPro" id="IPR019888">
    <property type="entry name" value="Tscrpt_reg_AsnC-like"/>
</dbReference>
<dbReference type="InterPro" id="IPR036388">
    <property type="entry name" value="WH-like_DNA-bd_sf"/>
</dbReference>
<dbReference type="InterPro" id="IPR036390">
    <property type="entry name" value="WH_DNA-bd_sf"/>
</dbReference>
<dbReference type="PANTHER" id="PTHR30154">
    <property type="entry name" value="LEUCINE-RESPONSIVE REGULATORY PROTEIN"/>
    <property type="match status" value="1"/>
</dbReference>
<dbReference type="PANTHER" id="PTHR30154:SF34">
    <property type="entry name" value="TRANSCRIPTIONAL REGULATOR AZLB"/>
    <property type="match status" value="1"/>
</dbReference>
<dbReference type="Pfam" id="PF13404">
    <property type="entry name" value="HTH_AsnC-type"/>
    <property type="match status" value="1"/>
</dbReference>
<dbReference type="PRINTS" id="PR00033">
    <property type="entry name" value="HTHASNC"/>
</dbReference>
<dbReference type="SMART" id="SM00344">
    <property type="entry name" value="HTH_ASNC"/>
    <property type="match status" value="1"/>
</dbReference>
<dbReference type="SUPFAM" id="SSF54909">
    <property type="entry name" value="Dimeric alpha+beta barrel"/>
    <property type="match status" value="1"/>
</dbReference>
<dbReference type="SUPFAM" id="SSF46785">
    <property type="entry name" value="Winged helix' DNA-binding domain"/>
    <property type="match status" value="1"/>
</dbReference>
<dbReference type="PROSITE" id="PS50956">
    <property type="entry name" value="HTH_ASNC_2"/>
    <property type="match status" value="1"/>
</dbReference>
<protein>
    <recommendedName>
        <fullName>Uncharacterized HTH-type transcriptional regulator PH1055</fullName>
    </recommendedName>
</protein>
<organism>
    <name type="scientific">Pyrococcus horikoshii (strain ATCC 700860 / DSM 12428 / JCM 9974 / NBRC 100139 / OT-3)</name>
    <dbReference type="NCBI Taxonomy" id="70601"/>
    <lineage>
        <taxon>Archaea</taxon>
        <taxon>Methanobacteriati</taxon>
        <taxon>Methanobacteriota</taxon>
        <taxon>Thermococci</taxon>
        <taxon>Thermococcales</taxon>
        <taxon>Thermococcaceae</taxon>
        <taxon>Pyrococcus</taxon>
    </lineage>
</organism>
<name>REG5_PYRHO</name>